<evidence type="ECO:0000255" key="1">
    <source>
        <dbReference type="HAMAP-Rule" id="MF_00821"/>
    </source>
</evidence>
<feature type="chain" id="PRO_1000213106" description="Protein-export protein SecB">
    <location>
        <begin position="1"/>
        <end position="162"/>
    </location>
</feature>
<dbReference type="EMBL" id="CP001277">
    <property type="protein sequence ID" value="ACQ67518.1"/>
    <property type="molecule type" value="Genomic_DNA"/>
</dbReference>
<dbReference type="RefSeq" id="WP_015873338.1">
    <property type="nucleotide sequence ID" value="NC_012751.1"/>
</dbReference>
<dbReference type="SMR" id="C4K4M5"/>
<dbReference type="STRING" id="572265.HDEF_0791"/>
<dbReference type="GeneID" id="66260632"/>
<dbReference type="KEGG" id="hde:HDEF_0791"/>
<dbReference type="eggNOG" id="COG1952">
    <property type="taxonomic scope" value="Bacteria"/>
</dbReference>
<dbReference type="HOGENOM" id="CLU_111574_1_0_6"/>
<dbReference type="Proteomes" id="UP000002334">
    <property type="component" value="Chromosome"/>
</dbReference>
<dbReference type="GO" id="GO:0005737">
    <property type="term" value="C:cytoplasm"/>
    <property type="evidence" value="ECO:0007669"/>
    <property type="project" value="UniProtKB-SubCell"/>
</dbReference>
<dbReference type="GO" id="GO:0051082">
    <property type="term" value="F:unfolded protein binding"/>
    <property type="evidence" value="ECO:0007669"/>
    <property type="project" value="InterPro"/>
</dbReference>
<dbReference type="GO" id="GO:0006457">
    <property type="term" value="P:protein folding"/>
    <property type="evidence" value="ECO:0007669"/>
    <property type="project" value="UniProtKB-UniRule"/>
</dbReference>
<dbReference type="GO" id="GO:0051262">
    <property type="term" value="P:protein tetramerization"/>
    <property type="evidence" value="ECO:0007669"/>
    <property type="project" value="InterPro"/>
</dbReference>
<dbReference type="GO" id="GO:0015031">
    <property type="term" value="P:protein transport"/>
    <property type="evidence" value="ECO:0007669"/>
    <property type="project" value="UniProtKB-UniRule"/>
</dbReference>
<dbReference type="Gene3D" id="3.10.420.10">
    <property type="entry name" value="SecB-like"/>
    <property type="match status" value="1"/>
</dbReference>
<dbReference type="HAMAP" id="MF_00821">
    <property type="entry name" value="SecB"/>
    <property type="match status" value="1"/>
</dbReference>
<dbReference type="InterPro" id="IPR003708">
    <property type="entry name" value="SecB"/>
</dbReference>
<dbReference type="InterPro" id="IPR035958">
    <property type="entry name" value="SecB-like_sf"/>
</dbReference>
<dbReference type="NCBIfam" id="NF004393">
    <property type="entry name" value="PRK05751.1-4"/>
    <property type="match status" value="1"/>
</dbReference>
<dbReference type="NCBIfam" id="TIGR00809">
    <property type="entry name" value="secB"/>
    <property type="match status" value="1"/>
</dbReference>
<dbReference type="PANTHER" id="PTHR36918">
    <property type="match status" value="1"/>
</dbReference>
<dbReference type="PANTHER" id="PTHR36918:SF1">
    <property type="entry name" value="PROTEIN-EXPORT PROTEIN SECB"/>
    <property type="match status" value="1"/>
</dbReference>
<dbReference type="Pfam" id="PF02556">
    <property type="entry name" value="SecB"/>
    <property type="match status" value="1"/>
</dbReference>
<dbReference type="PRINTS" id="PR01594">
    <property type="entry name" value="SECBCHAPRONE"/>
</dbReference>
<dbReference type="SUPFAM" id="SSF54611">
    <property type="entry name" value="SecB-like"/>
    <property type="match status" value="1"/>
</dbReference>
<organism>
    <name type="scientific">Hamiltonella defensa subsp. Acyrthosiphon pisum (strain 5AT)</name>
    <dbReference type="NCBI Taxonomy" id="572265"/>
    <lineage>
        <taxon>Bacteria</taxon>
        <taxon>Pseudomonadati</taxon>
        <taxon>Pseudomonadota</taxon>
        <taxon>Gammaproteobacteria</taxon>
        <taxon>Enterobacterales</taxon>
        <taxon>Enterobacteriaceae</taxon>
        <taxon>aphid secondary symbionts</taxon>
        <taxon>Candidatus Hamiltonella</taxon>
    </lineage>
</organism>
<keyword id="KW-0143">Chaperone</keyword>
<keyword id="KW-0963">Cytoplasm</keyword>
<keyword id="KW-0653">Protein transport</keyword>
<keyword id="KW-0811">Translocation</keyword>
<keyword id="KW-0813">Transport</keyword>
<reference key="1">
    <citation type="journal article" date="2009" name="Proc. Natl. Acad. Sci. U.S.A.">
        <title>Hamiltonella defensa, genome evolution of protective bacterial endosymbiont from pathogenic ancestors.</title>
        <authorList>
            <person name="Degnan P.H."/>
            <person name="Yu Y."/>
            <person name="Sisneros N."/>
            <person name="Wing R.A."/>
            <person name="Moran N.A."/>
        </authorList>
    </citation>
    <scope>NUCLEOTIDE SEQUENCE [LARGE SCALE GENOMIC DNA]</scope>
    <source>
        <strain>5AT</strain>
    </source>
</reference>
<accession>C4K4M5</accession>
<gene>
    <name evidence="1" type="primary">secB</name>
    <name type="ordered locus">HDEF_0791</name>
</gene>
<proteinExistence type="inferred from homology"/>
<comment type="function">
    <text evidence="1">One of the proteins required for the normal export of preproteins out of the cell cytoplasm. It is a molecular chaperone that binds to a subset of precursor proteins, maintaining them in a translocation-competent state. It also specifically binds to its receptor SecA.</text>
</comment>
<comment type="subunit">
    <text evidence="1">Homotetramer, a dimer of dimers. One homotetramer interacts with 1 SecA dimer.</text>
</comment>
<comment type="subcellular location">
    <subcellularLocation>
        <location evidence="1">Cytoplasm</location>
    </subcellularLocation>
</comment>
<comment type="similarity">
    <text evidence="1">Belongs to the SecB family.</text>
</comment>
<name>SECB_HAMD5</name>
<sequence>MLEEENSQMICQIYRIYTKDISFEAPGAPQIFQKEGSPDIKLDLDTSSNLLAENTHEVVLRITLTATIEGQTSFLCEVQQAGIFFIKNIENMQLKHCLGAYCPNILFPYARECISNLVSKGSFPHLHLEPINFDSLFMNYVQQEAEKQNESDPIIIKNSEQD</sequence>
<protein>
    <recommendedName>
        <fullName evidence="1">Protein-export protein SecB</fullName>
    </recommendedName>
</protein>